<dbReference type="EC" id="1.7.2.2" evidence="1"/>
<dbReference type="EMBL" id="CP000020">
    <property type="protein sequence ID" value="AAW86049.1"/>
    <property type="molecule type" value="Genomic_DNA"/>
</dbReference>
<dbReference type="RefSeq" id="WP_011262128.1">
    <property type="nucleotide sequence ID" value="NZ_CAWLES010000001.1"/>
</dbReference>
<dbReference type="RefSeq" id="YP_204937.1">
    <property type="nucleotide sequence ID" value="NC_006840.2"/>
</dbReference>
<dbReference type="SMR" id="Q5E4J7"/>
<dbReference type="STRING" id="312309.VF_1554"/>
<dbReference type="EnsemblBacteria" id="AAW86049">
    <property type="protein sequence ID" value="AAW86049"/>
    <property type="gene ID" value="VF_1554"/>
</dbReference>
<dbReference type="GeneID" id="54164228"/>
<dbReference type="KEGG" id="vfi:VF_1554"/>
<dbReference type="PATRIC" id="fig|312309.11.peg.1572"/>
<dbReference type="eggNOG" id="COG3303">
    <property type="taxonomic scope" value="Bacteria"/>
</dbReference>
<dbReference type="HOGENOM" id="CLU_035040_1_0_6"/>
<dbReference type="OrthoDB" id="9780421at2"/>
<dbReference type="BioCyc" id="MetaCyc:MONOMER-13459"/>
<dbReference type="UniPathway" id="UPA00653"/>
<dbReference type="Proteomes" id="UP000000537">
    <property type="component" value="Chromosome I"/>
</dbReference>
<dbReference type="GO" id="GO:0030288">
    <property type="term" value="C:outer membrane-bounded periplasmic space"/>
    <property type="evidence" value="ECO:0007669"/>
    <property type="project" value="TreeGrafter"/>
</dbReference>
<dbReference type="GO" id="GO:0005509">
    <property type="term" value="F:calcium ion binding"/>
    <property type="evidence" value="ECO:0007669"/>
    <property type="project" value="UniProtKB-UniRule"/>
</dbReference>
<dbReference type="GO" id="GO:0020037">
    <property type="term" value="F:heme binding"/>
    <property type="evidence" value="ECO:0007669"/>
    <property type="project" value="InterPro"/>
</dbReference>
<dbReference type="GO" id="GO:0005506">
    <property type="term" value="F:iron ion binding"/>
    <property type="evidence" value="ECO:0007669"/>
    <property type="project" value="UniProtKB-UniRule"/>
</dbReference>
<dbReference type="GO" id="GO:0042279">
    <property type="term" value="F:nitrite reductase (cytochrome, ammonia-forming) activity"/>
    <property type="evidence" value="ECO:0007669"/>
    <property type="project" value="UniProtKB-UniRule"/>
</dbReference>
<dbReference type="GO" id="GO:0019645">
    <property type="term" value="P:anaerobic electron transport chain"/>
    <property type="evidence" value="ECO:0007669"/>
    <property type="project" value="TreeGrafter"/>
</dbReference>
<dbReference type="GO" id="GO:0042128">
    <property type="term" value="P:nitrate assimilation"/>
    <property type="evidence" value="ECO:0007669"/>
    <property type="project" value="UniProtKB-UniRule"/>
</dbReference>
<dbReference type="CDD" id="cd00548">
    <property type="entry name" value="NrfA-like"/>
    <property type="match status" value="1"/>
</dbReference>
<dbReference type="FunFam" id="1.10.1130.10:FF:000002">
    <property type="entry name" value="Cytochrome c-552"/>
    <property type="match status" value="1"/>
</dbReference>
<dbReference type="FunFam" id="1.20.140.10:FF:000014">
    <property type="entry name" value="Cytochrome c-552"/>
    <property type="match status" value="1"/>
</dbReference>
<dbReference type="Gene3D" id="1.20.140.10">
    <property type="entry name" value="Butyryl-CoA Dehydrogenase, subunit A, domain 3"/>
    <property type="match status" value="1"/>
</dbReference>
<dbReference type="Gene3D" id="1.10.1130.10">
    <property type="entry name" value="Flavocytochrome C3, Chain A"/>
    <property type="match status" value="1"/>
</dbReference>
<dbReference type="HAMAP" id="MF_01182">
    <property type="entry name" value="Cytochrom_C552"/>
    <property type="match status" value="1"/>
</dbReference>
<dbReference type="InterPro" id="IPR003321">
    <property type="entry name" value="Cyt_c552"/>
</dbReference>
<dbReference type="InterPro" id="IPR017570">
    <property type="entry name" value="Cyt_c_NO2Rdtase_formate-dep"/>
</dbReference>
<dbReference type="InterPro" id="IPR036280">
    <property type="entry name" value="Multihaem_cyt_sf"/>
</dbReference>
<dbReference type="NCBIfam" id="TIGR03152">
    <property type="entry name" value="cyto_c552_HCOOH"/>
    <property type="match status" value="1"/>
</dbReference>
<dbReference type="NCBIfam" id="NF008339">
    <property type="entry name" value="PRK11125.1"/>
    <property type="match status" value="1"/>
</dbReference>
<dbReference type="PANTHER" id="PTHR30633:SF0">
    <property type="entry name" value="CYTOCHROME C-552"/>
    <property type="match status" value="1"/>
</dbReference>
<dbReference type="PANTHER" id="PTHR30633">
    <property type="entry name" value="CYTOCHROME C-552 RESPIRATORY NITRITE REDUCTASE"/>
    <property type="match status" value="1"/>
</dbReference>
<dbReference type="Pfam" id="PF02335">
    <property type="entry name" value="Cytochrom_C552"/>
    <property type="match status" value="1"/>
</dbReference>
<dbReference type="PIRSF" id="PIRSF000243">
    <property type="entry name" value="Cyt_c552"/>
    <property type="match status" value="1"/>
</dbReference>
<dbReference type="SUPFAM" id="SSF48695">
    <property type="entry name" value="Multiheme cytochromes"/>
    <property type="match status" value="1"/>
</dbReference>
<dbReference type="PROSITE" id="PS51008">
    <property type="entry name" value="MULTIHEME_CYTC"/>
    <property type="match status" value="1"/>
</dbReference>
<reference key="1">
    <citation type="journal article" date="2005" name="Proc. Natl. Acad. Sci. U.S.A.">
        <title>Complete genome sequence of Vibrio fischeri: a symbiotic bacterium with pathogenic congeners.</title>
        <authorList>
            <person name="Ruby E.G."/>
            <person name="Urbanowski M."/>
            <person name="Campbell J."/>
            <person name="Dunn A."/>
            <person name="Faini M."/>
            <person name="Gunsalus R."/>
            <person name="Lostroh P."/>
            <person name="Lupp C."/>
            <person name="McCann J."/>
            <person name="Millikan D."/>
            <person name="Schaefer A."/>
            <person name="Stabb E."/>
            <person name="Stevens A."/>
            <person name="Visick K."/>
            <person name="Whistler C."/>
            <person name="Greenberg E.P."/>
        </authorList>
    </citation>
    <scope>NUCLEOTIDE SEQUENCE [LARGE SCALE GENOMIC DNA]</scope>
    <source>
        <strain>ATCC 700601 / ES114</strain>
    </source>
</reference>
<keyword id="KW-0106">Calcium</keyword>
<keyword id="KW-0249">Electron transport</keyword>
<keyword id="KW-0349">Heme</keyword>
<keyword id="KW-0408">Iron</keyword>
<keyword id="KW-0479">Metal-binding</keyword>
<keyword id="KW-0560">Oxidoreductase</keyword>
<keyword id="KW-0574">Periplasm</keyword>
<keyword id="KW-1185">Reference proteome</keyword>
<keyword id="KW-0732">Signal</keyword>
<keyword id="KW-0813">Transport</keyword>
<evidence type="ECO:0000255" key="1">
    <source>
        <dbReference type="HAMAP-Rule" id="MF_01182"/>
    </source>
</evidence>
<protein>
    <recommendedName>
        <fullName evidence="1">Cytochrome c-552</fullName>
        <ecNumber evidence="1">1.7.2.2</ecNumber>
    </recommendedName>
    <alternativeName>
        <fullName evidence="1">Ammonia-forming cytochrome c nitrite reductase</fullName>
        <shortName evidence="1">Cytochrome c nitrite reductase</shortName>
    </alternativeName>
</protein>
<accession>Q5E4J7</accession>
<proteinExistence type="inferred from homology"/>
<gene>
    <name evidence="1" type="primary">nrfA</name>
    <name type="ordered locus">VF_1554</name>
</gene>
<name>NRFA_ALIF1</name>
<feature type="signal peptide" evidence="1">
    <location>
        <begin position="1"/>
        <end position="27"/>
    </location>
</feature>
<feature type="chain" id="PRO_0000268981" description="Cytochrome c-552">
    <location>
        <begin position="28"/>
        <end position="478"/>
    </location>
</feature>
<feature type="binding site" description="axial binding residue" evidence="1">
    <location>
        <position position="91"/>
    </location>
    <ligand>
        <name>heme c</name>
        <dbReference type="ChEBI" id="CHEBI:61717"/>
        <label>3</label>
    </ligand>
    <ligandPart>
        <name>Fe</name>
        <dbReference type="ChEBI" id="CHEBI:18248"/>
    </ligandPart>
</feature>
<feature type="binding site" description="covalent" evidence="1">
    <location>
        <position position="119"/>
    </location>
    <ligand>
        <name>heme</name>
        <dbReference type="ChEBI" id="CHEBI:30413"/>
        <label>1</label>
    </ligand>
</feature>
<feature type="binding site" description="covalent" evidence="1">
    <location>
        <position position="122"/>
    </location>
    <ligand>
        <name>heme</name>
        <dbReference type="ChEBI" id="CHEBI:30413"/>
        <label>1</label>
    </ligand>
</feature>
<feature type="binding site" description="axial binding residue" evidence="1">
    <location>
        <position position="123"/>
    </location>
    <ligand>
        <name>heme</name>
        <dbReference type="ChEBI" id="CHEBI:30413"/>
        <label>1</label>
    </ligand>
    <ligandPart>
        <name>Fe</name>
        <dbReference type="ChEBI" id="CHEBI:18248"/>
    </ligandPart>
</feature>
<feature type="binding site" description="covalent" evidence="1">
    <location>
        <position position="157"/>
    </location>
    <ligand>
        <name>heme c</name>
        <dbReference type="ChEBI" id="CHEBI:61717"/>
        <label>2</label>
    </ligand>
</feature>
<feature type="binding site" description="covalent" evidence="1">
    <location>
        <position position="160"/>
    </location>
    <ligand>
        <name>heme c</name>
        <dbReference type="ChEBI" id="CHEBI:61717"/>
        <label>2</label>
    </ligand>
</feature>
<feature type="binding site" description="axial binding residue" evidence="1">
    <location>
        <position position="161"/>
    </location>
    <ligand>
        <name>heme c</name>
        <dbReference type="ChEBI" id="CHEBI:61717"/>
        <label>2</label>
    </ligand>
    <ligandPart>
        <name>Fe</name>
        <dbReference type="ChEBI" id="CHEBI:18248"/>
    </ligandPart>
</feature>
<feature type="binding site" description="covalent" evidence="1">
    <location>
        <position position="206"/>
    </location>
    <ligand>
        <name>heme c</name>
        <dbReference type="ChEBI" id="CHEBI:61717"/>
        <label>3</label>
    </ligand>
</feature>
<feature type="binding site" description="covalent" evidence="1">
    <location>
        <position position="209"/>
    </location>
    <ligand>
        <name>heme c</name>
        <dbReference type="ChEBI" id="CHEBI:61717"/>
        <label>3</label>
    </ligand>
</feature>
<feature type="binding site" description="axial binding residue" evidence="1">
    <location>
        <position position="210"/>
    </location>
    <ligand>
        <name>heme c</name>
        <dbReference type="ChEBI" id="CHEBI:61717"/>
        <label>3</label>
    </ligand>
    <ligandPart>
        <name>Fe</name>
        <dbReference type="ChEBI" id="CHEBI:18248"/>
    </ligandPart>
</feature>
<feature type="binding site" evidence="1">
    <location>
        <position position="212"/>
    </location>
    <ligand>
        <name>Ca(2+)</name>
        <dbReference type="ChEBI" id="CHEBI:29108"/>
    </ligand>
</feature>
<feature type="binding site" evidence="1">
    <location>
        <position position="213"/>
    </location>
    <ligand>
        <name>Ca(2+)</name>
        <dbReference type="ChEBI" id="CHEBI:29108"/>
    </ligand>
</feature>
<feature type="binding site" evidence="1">
    <location>
        <position position="213"/>
    </location>
    <ligand>
        <name>substrate</name>
    </ligand>
</feature>
<feature type="binding site" evidence="1">
    <location>
        <position position="258"/>
    </location>
    <ligand>
        <name>Ca(2+)</name>
        <dbReference type="ChEBI" id="CHEBI:29108"/>
    </ligand>
</feature>
<feature type="binding site" evidence="1">
    <location>
        <position position="260"/>
    </location>
    <ligand>
        <name>Ca(2+)</name>
        <dbReference type="ChEBI" id="CHEBI:29108"/>
    </ligand>
</feature>
<feature type="binding site" evidence="1">
    <location>
        <position position="261"/>
    </location>
    <ligand>
        <name>substrate</name>
    </ligand>
</feature>
<feature type="binding site" description="axial binding residue" evidence="1">
    <location>
        <position position="272"/>
    </location>
    <ligand>
        <name>heme c</name>
        <dbReference type="ChEBI" id="CHEBI:61717"/>
        <label>5</label>
    </ligand>
    <ligandPart>
        <name>Fe</name>
        <dbReference type="ChEBI" id="CHEBI:18248"/>
    </ligandPart>
</feature>
<feature type="binding site" description="covalent" evidence="1">
    <location>
        <position position="279"/>
    </location>
    <ligand>
        <name>heme c</name>
        <dbReference type="ChEBI" id="CHEBI:61717"/>
        <label>4</label>
    </ligand>
</feature>
<feature type="binding site" description="covalent" evidence="1">
    <location>
        <position position="282"/>
    </location>
    <ligand>
        <name>heme c</name>
        <dbReference type="ChEBI" id="CHEBI:61717"/>
        <label>4</label>
    </ligand>
</feature>
<feature type="binding site" description="axial binding residue" evidence="1">
    <location>
        <position position="283"/>
    </location>
    <ligand>
        <name>heme c</name>
        <dbReference type="ChEBI" id="CHEBI:61717"/>
        <label>4</label>
    </ligand>
    <ligandPart>
        <name>Fe</name>
        <dbReference type="ChEBI" id="CHEBI:18248"/>
    </ligandPart>
</feature>
<feature type="binding site" description="axial binding residue" evidence="1">
    <location>
        <position position="298"/>
    </location>
    <ligand>
        <name>heme c</name>
        <dbReference type="ChEBI" id="CHEBI:61717"/>
        <label>2</label>
    </ligand>
    <ligandPart>
        <name>Fe</name>
        <dbReference type="ChEBI" id="CHEBI:18248"/>
    </ligandPart>
</feature>
<feature type="binding site" description="covalent" evidence="1">
    <location>
        <position position="311"/>
    </location>
    <ligand>
        <name>heme c</name>
        <dbReference type="ChEBI" id="CHEBI:61717"/>
        <label>5</label>
    </ligand>
</feature>
<feature type="binding site" description="covalent" evidence="1">
    <location>
        <position position="314"/>
    </location>
    <ligand>
        <name>heme c</name>
        <dbReference type="ChEBI" id="CHEBI:61717"/>
        <label>5</label>
    </ligand>
</feature>
<feature type="binding site" description="axial binding residue" evidence="1">
    <location>
        <position position="315"/>
    </location>
    <ligand>
        <name>heme c</name>
        <dbReference type="ChEBI" id="CHEBI:61717"/>
        <label>5</label>
    </ligand>
    <ligandPart>
        <name>Fe</name>
        <dbReference type="ChEBI" id="CHEBI:18248"/>
    </ligandPart>
</feature>
<feature type="binding site" description="axial binding residue" evidence="1">
    <location>
        <position position="390"/>
    </location>
    <ligand>
        <name>heme c</name>
        <dbReference type="ChEBI" id="CHEBI:61717"/>
        <label>4</label>
    </ligand>
    <ligandPart>
        <name>Fe</name>
        <dbReference type="ChEBI" id="CHEBI:18248"/>
    </ligandPart>
</feature>
<comment type="function">
    <text evidence="1">Catalyzes the reduction of nitrite to ammonia, consuming six electrons in the process.</text>
</comment>
<comment type="catalytic activity">
    <reaction evidence="1">
        <text>6 Fe(III)-[cytochrome c] + NH4(+) + 2 H2O = 6 Fe(II)-[cytochrome c] + nitrite + 8 H(+)</text>
        <dbReference type="Rhea" id="RHEA:13089"/>
        <dbReference type="Rhea" id="RHEA-COMP:10350"/>
        <dbReference type="Rhea" id="RHEA-COMP:14399"/>
        <dbReference type="ChEBI" id="CHEBI:15377"/>
        <dbReference type="ChEBI" id="CHEBI:15378"/>
        <dbReference type="ChEBI" id="CHEBI:16301"/>
        <dbReference type="ChEBI" id="CHEBI:28938"/>
        <dbReference type="ChEBI" id="CHEBI:29033"/>
        <dbReference type="ChEBI" id="CHEBI:29034"/>
        <dbReference type="EC" id="1.7.2.2"/>
    </reaction>
</comment>
<comment type="cofactor">
    <cofactor evidence="1">
        <name>Ca(2+)</name>
        <dbReference type="ChEBI" id="CHEBI:29108"/>
    </cofactor>
    <text evidence="1">Binds 1 Ca(2+) ion per monomer.</text>
</comment>
<comment type="cofactor">
    <cofactor evidence="1">
        <name>heme c</name>
        <dbReference type="ChEBI" id="CHEBI:61717"/>
    </cofactor>
    <text evidence="1">Binds 5 heme c groups covalently per monomer.</text>
</comment>
<comment type="pathway">
    <text evidence="1">Nitrogen metabolism; nitrate reduction (assimilation).</text>
</comment>
<comment type="subcellular location">
    <subcellularLocation>
        <location evidence="1">Periplasm</location>
    </subcellularLocation>
</comment>
<comment type="similarity">
    <text evidence="1">Belongs to the cytochrome c-552 family.</text>
</comment>
<sequence length="478" mass="53447">MKKQWTRRSAAAIAMVTTLLLSSHSFAASENNERVDPRNEAYAKDHADQYDSWRSTSDSVQIEDALAEDPNMVILWAGYGFAKDYNKARGHFYAVDDVRQTLRTGGPTDENSGPMPMACWSCKSPDVGRVIEEQGEDGYFSGKWARLGSEIQNPIGCADCHDTRSEEFKNGGPALALTKPHVERAMDAIGKPFGDQSRLDQQAAVCGQCHVEYYFTGKTKAVKFPWDKGTTVDEMEEYYDEIGFKDWTHKVSKAPMLKAQHPGYETWRDGIHGKNKVTCVDCHMPKVTKEDGTVYTDHKVGNPFDRFEDTCANCHTQSKEMLQSVVATRKAQVLKMKLTAERQIVAAHFEAGAAWDAGATEKEMAPILQDIRHAQWRWDYAIASHGVHMHAPEVALEVLGTAVDKAADARTKLVRLLAKKGITEPVAIPDISTKAAAQKALGMDMEAMKAEKKHFLETVVPEWEEQAKEREARDYEPM</sequence>
<organism>
    <name type="scientific">Aliivibrio fischeri (strain ATCC 700601 / ES114)</name>
    <name type="common">Vibrio fischeri</name>
    <dbReference type="NCBI Taxonomy" id="312309"/>
    <lineage>
        <taxon>Bacteria</taxon>
        <taxon>Pseudomonadati</taxon>
        <taxon>Pseudomonadota</taxon>
        <taxon>Gammaproteobacteria</taxon>
        <taxon>Vibrionales</taxon>
        <taxon>Vibrionaceae</taxon>
        <taxon>Aliivibrio</taxon>
    </lineage>
</organism>